<gene>
    <name evidence="1" type="primary">ybeY</name>
    <name type="ordered locus">RP741</name>
</gene>
<evidence type="ECO:0000255" key="1">
    <source>
        <dbReference type="HAMAP-Rule" id="MF_00009"/>
    </source>
</evidence>
<evidence type="ECO:0000305" key="2"/>
<reference key="1">
    <citation type="journal article" date="1997" name="Microbiology">
        <title>Genomic rearrangements during evolution of the obligate intracellular parasite Rickettsia prowazekii as inferred from an analysis of 52015 bp nucleotide sequence.</title>
        <authorList>
            <person name="Andersson J.O."/>
            <person name="Andersson S.G.E."/>
        </authorList>
    </citation>
    <scope>NUCLEOTIDE SEQUENCE [GENOMIC DNA]</scope>
    <source>
        <strain>Madrid E</strain>
    </source>
</reference>
<reference key="2">
    <citation type="journal article" date="1998" name="Nature">
        <title>The genome sequence of Rickettsia prowazekii and the origin of mitochondria.</title>
        <authorList>
            <person name="Andersson S.G.E."/>
            <person name="Zomorodipour A."/>
            <person name="Andersson J.O."/>
            <person name="Sicheritz-Ponten T."/>
            <person name="Alsmark U.C.M."/>
            <person name="Podowski R.M."/>
            <person name="Naeslund A.K."/>
            <person name="Eriksson A.-S."/>
            <person name="Winkler H.H."/>
            <person name="Kurland C.G."/>
        </authorList>
    </citation>
    <scope>NUCLEOTIDE SEQUENCE [LARGE SCALE GENOMIC DNA]</scope>
    <source>
        <strain>Madrid E</strain>
    </source>
</reference>
<dbReference type="EC" id="3.1.-.-" evidence="1"/>
<dbReference type="EMBL" id="Y11778">
    <property type="protein sequence ID" value="CAA72455.1"/>
    <property type="status" value="ALT_INIT"/>
    <property type="molecule type" value="Genomic_DNA"/>
</dbReference>
<dbReference type="EMBL" id="AJ235273">
    <property type="protein sequence ID" value="CAA15169.1"/>
    <property type="status" value="ALT_INIT"/>
    <property type="molecule type" value="Genomic_DNA"/>
</dbReference>
<dbReference type="PIR" id="A71634">
    <property type="entry name" value="A71634"/>
</dbReference>
<dbReference type="RefSeq" id="NP_221093.1">
    <property type="nucleotide sequence ID" value="NC_000963.1"/>
</dbReference>
<dbReference type="RefSeq" id="WP_004597020.1">
    <property type="nucleotide sequence ID" value="NC_000963.1"/>
</dbReference>
<dbReference type="SMR" id="O05960"/>
<dbReference type="STRING" id="272947.gene:17555811"/>
<dbReference type="EnsemblBacteria" id="CAA15169">
    <property type="protein sequence ID" value="CAA15169"/>
    <property type="gene ID" value="CAA15169"/>
</dbReference>
<dbReference type="GeneID" id="57569862"/>
<dbReference type="KEGG" id="rpr:RP741"/>
<dbReference type="PATRIC" id="fig|272947.5.peg.774"/>
<dbReference type="eggNOG" id="COG0319">
    <property type="taxonomic scope" value="Bacteria"/>
</dbReference>
<dbReference type="HOGENOM" id="CLU_106710_0_0_5"/>
<dbReference type="OrthoDB" id="9807740at2"/>
<dbReference type="Proteomes" id="UP000002480">
    <property type="component" value="Chromosome"/>
</dbReference>
<dbReference type="GO" id="GO:0005737">
    <property type="term" value="C:cytoplasm"/>
    <property type="evidence" value="ECO:0007669"/>
    <property type="project" value="UniProtKB-SubCell"/>
</dbReference>
<dbReference type="GO" id="GO:0004222">
    <property type="term" value="F:metalloendopeptidase activity"/>
    <property type="evidence" value="ECO:0007669"/>
    <property type="project" value="InterPro"/>
</dbReference>
<dbReference type="GO" id="GO:0004521">
    <property type="term" value="F:RNA endonuclease activity"/>
    <property type="evidence" value="ECO:0007669"/>
    <property type="project" value="UniProtKB-UniRule"/>
</dbReference>
<dbReference type="GO" id="GO:0008270">
    <property type="term" value="F:zinc ion binding"/>
    <property type="evidence" value="ECO:0007669"/>
    <property type="project" value="UniProtKB-UniRule"/>
</dbReference>
<dbReference type="GO" id="GO:0006364">
    <property type="term" value="P:rRNA processing"/>
    <property type="evidence" value="ECO:0007669"/>
    <property type="project" value="UniProtKB-UniRule"/>
</dbReference>
<dbReference type="Gene3D" id="3.40.390.30">
    <property type="entry name" value="Metalloproteases ('zincins'), catalytic domain"/>
    <property type="match status" value="1"/>
</dbReference>
<dbReference type="HAMAP" id="MF_00009">
    <property type="entry name" value="Endoribonucl_YbeY"/>
    <property type="match status" value="1"/>
</dbReference>
<dbReference type="InterPro" id="IPR023091">
    <property type="entry name" value="MetalPrtase_cat_dom_sf_prd"/>
</dbReference>
<dbReference type="InterPro" id="IPR002036">
    <property type="entry name" value="YbeY"/>
</dbReference>
<dbReference type="InterPro" id="IPR020549">
    <property type="entry name" value="YbeY_CS"/>
</dbReference>
<dbReference type="NCBIfam" id="TIGR00043">
    <property type="entry name" value="rRNA maturation RNase YbeY"/>
    <property type="match status" value="1"/>
</dbReference>
<dbReference type="PANTHER" id="PTHR46986">
    <property type="entry name" value="ENDORIBONUCLEASE YBEY, CHLOROPLASTIC"/>
    <property type="match status" value="1"/>
</dbReference>
<dbReference type="PANTHER" id="PTHR46986:SF1">
    <property type="entry name" value="ENDORIBONUCLEASE YBEY, CHLOROPLASTIC"/>
    <property type="match status" value="1"/>
</dbReference>
<dbReference type="Pfam" id="PF02130">
    <property type="entry name" value="YbeY"/>
    <property type="match status" value="1"/>
</dbReference>
<dbReference type="SUPFAM" id="SSF55486">
    <property type="entry name" value="Metalloproteases ('zincins'), catalytic domain"/>
    <property type="match status" value="1"/>
</dbReference>
<dbReference type="PROSITE" id="PS01306">
    <property type="entry name" value="UPF0054"/>
    <property type="match status" value="1"/>
</dbReference>
<accession>O05960</accession>
<name>YBEY_RICPR</name>
<organism>
    <name type="scientific">Rickettsia prowazekii (strain Madrid E)</name>
    <dbReference type="NCBI Taxonomy" id="272947"/>
    <lineage>
        <taxon>Bacteria</taxon>
        <taxon>Pseudomonadati</taxon>
        <taxon>Pseudomonadota</taxon>
        <taxon>Alphaproteobacteria</taxon>
        <taxon>Rickettsiales</taxon>
        <taxon>Rickettsiaceae</taxon>
        <taxon>Rickettsieae</taxon>
        <taxon>Rickettsia</taxon>
        <taxon>typhus group</taxon>
    </lineage>
</organism>
<protein>
    <recommendedName>
        <fullName evidence="1">Endoribonuclease YbeY</fullName>
        <ecNumber evidence="1">3.1.-.-</ecNumber>
    </recommendedName>
</protein>
<proteinExistence type="inferred from homology"/>
<sequence>MINVEIIRNYNKWREHRKINKGLIKKITQNVLVRFDNFSKIKQFELSILLTNTAEILTLNQQFRSIEKATNVLSFPNNELNWHNLYSKLEFLYYSDYMHLGDIAFCYEVIYNESCEQQKTFENHFIHMLIHSILHLIGFDHQNDTDANIMESLEIEILSYFGIPSPY</sequence>
<keyword id="KW-0963">Cytoplasm</keyword>
<keyword id="KW-0255">Endonuclease</keyword>
<keyword id="KW-0378">Hydrolase</keyword>
<keyword id="KW-0479">Metal-binding</keyword>
<keyword id="KW-0540">Nuclease</keyword>
<keyword id="KW-1185">Reference proteome</keyword>
<keyword id="KW-0690">Ribosome biogenesis</keyword>
<keyword id="KW-0698">rRNA processing</keyword>
<keyword id="KW-0862">Zinc</keyword>
<feature type="chain" id="PRO_0000102519" description="Endoribonuclease YbeY">
    <location>
        <begin position="1"/>
        <end position="167"/>
    </location>
</feature>
<feature type="binding site" evidence="1">
    <location>
        <position position="131"/>
    </location>
    <ligand>
        <name>Zn(2+)</name>
        <dbReference type="ChEBI" id="CHEBI:29105"/>
        <note>catalytic</note>
    </ligand>
</feature>
<feature type="binding site" evidence="1">
    <location>
        <position position="135"/>
    </location>
    <ligand>
        <name>Zn(2+)</name>
        <dbReference type="ChEBI" id="CHEBI:29105"/>
        <note>catalytic</note>
    </ligand>
</feature>
<feature type="binding site" evidence="1">
    <location>
        <position position="141"/>
    </location>
    <ligand>
        <name>Zn(2+)</name>
        <dbReference type="ChEBI" id="CHEBI:29105"/>
        <note>catalytic</note>
    </ligand>
</feature>
<comment type="function">
    <text evidence="1">Single strand-specific metallo-endoribonuclease involved in late-stage 70S ribosome quality control and in maturation of the 3' terminus of the 16S rRNA.</text>
</comment>
<comment type="cofactor">
    <cofactor evidence="1">
        <name>Zn(2+)</name>
        <dbReference type="ChEBI" id="CHEBI:29105"/>
    </cofactor>
    <text evidence="1">Binds 1 zinc ion.</text>
</comment>
<comment type="subcellular location">
    <subcellularLocation>
        <location evidence="1">Cytoplasm</location>
    </subcellularLocation>
</comment>
<comment type="similarity">
    <text evidence="1">Belongs to the endoribonuclease YbeY family.</text>
</comment>
<comment type="sequence caution" evidence="2">
    <conflict type="erroneous initiation">
        <sequence resource="EMBL-CDS" id="CAA15169"/>
    </conflict>
</comment>
<comment type="sequence caution" evidence="2">
    <conflict type="erroneous initiation">
        <sequence resource="EMBL-CDS" id="CAA72455"/>
    </conflict>
</comment>